<dbReference type="EMBL" id="AE013598">
    <property type="protein sequence ID" value="AAW74320.1"/>
    <property type="molecule type" value="Genomic_DNA"/>
</dbReference>
<dbReference type="SMR" id="Q5H401"/>
<dbReference type="STRING" id="291331.XOO1066"/>
<dbReference type="KEGG" id="xoo:XOO1066"/>
<dbReference type="HOGENOM" id="CLU_060739_1_2_6"/>
<dbReference type="Proteomes" id="UP000006735">
    <property type="component" value="Chromosome"/>
</dbReference>
<dbReference type="GO" id="GO:0003677">
    <property type="term" value="F:DNA binding"/>
    <property type="evidence" value="ECO:0007669"/>
    <property type="project" value="UniProtKB-UniRule"/>
</dbReference>
<dbReference type="GO" id="GO:0008270">
    <property type="term" value="F:zinc ion binding"/>
    <property type="evidence" value="ECO:0007669"/>
    <property type="project" value="UniProtKB-KW"/>
</dbReference>
<dbReference type="GO" id="GO:0006310">
    <property type="term" value="P:DNA recombination"/>
    <property type="evidence" value="ECO:0007669"/>
    <property type="project" value="UniProtKB-UniRule"/>
</dbReference>
<dbReference type="GO" id="GO:0006281">
    <property type="term" value="P:DNA repair"/>
    <property type="evidence" value="ECO:0007669"/>
    <property type="project" value="UniProtKB-UniRule"/>
</dbReference>
<dbReference type="CDD" id="cd01025">
    <property type="entry name" value="TOPRIM_recR"/>
    <property type="match status" value="1"/>
</dbReference>
<dbReference type="Gene3D" id="3.40.1360.10">
    <property type="match status" value="1"/>
</dbReference>
<dbReference type="Gene3D" id="6.10.250.240">
    <property type="match status" value="1"/>
</dbReference>
<dbReference type="Gene3D" id="1.10.8.420">
    <property type="entry name" value="RecR Domain 1"/>
    <property type="match status" value="1"/>
</dbReference>
<dbReference type="HAMAP" id="MF_00017">
    <property type="entry name" value="RecR"/>
    <property type="match status" value="1"/>
</dbReference>
<dbReference type="InterPro" id="IPR000093">
    <property type="entry name" value="DNA_Rcmb_RecR"/>
</dbReference>
<dbReference type="InterPro" id="IPR023627">
    <property type="entry name" value="Rcmb_RecR"/>
</dbReference>
<dbReference type="InterPro" id="IPR015967">
    <property type="entry name" value="Rcmb_RecR_Znf"/>
</dbReference>
<dbReference type="InterPro" id="IPR006171">
    <property type="entry name" value="TOPRIM_dom"/>
</dbReference>
<dbReference type="InterPro" id="IPR034137">
    <property type="entry name" value="TOPRIM_RecR"/>
</dbReference>
<dbReference type="NCBIfam" id="TIGR00615">
    <property type="entry name" value="recR"/>
    <property type="match status" value="1"/>
</dbReference>
<dbReference type="PANTHER" id="PTHR30446">
    <property type="entry name" value="RECOMBINATION PROTEIN RECR"/>
    <property type="match status" value="1"/>
</dbReference>
<dbReference type="PANTHER" id="PTHR30446:SF0">
    <property type="entry name" value="RECOMBINATION PROTEIN RECR"/>
    <property type="match status" value="1"/>
</dbReference>
<dbReference type="Pfam" id="PF21175">
    <property type="entry name" value="RecR_C"/>
    <property type="match status" value="1"/>
</dbReference>
<dbReference type="Pfam" id="PF21176">
    <property type="entry name" value="RecR_HhH"/>
    <property type="match status" value="1"/>
</dbReference>
<dbReference type="Pfam" id="PF02132">
    <property type="entry name" value="RecR_ZnF"/>
    <property type="match status" value="1"/>
</dbReference>
<dbReference type="Pfam" id="PF13662">
    <property type="entry name" value="Toprim_4"/>
    <property type="match status" value="1"/>
</dbReference>
<dbReference type="SMART" id="SM00493">
    <property type="entry name" value="TOPRIM"/>
    <property type="match status" value="1"/>
</dbReference>
<dbReference type="SUPFAM" id="SSF111304">
    <property type="entry name" value="Recombination protein RecR"/>
    <property type="match status" value="1"/>
</dbReference>
<dbReference type="PROSITE" id="PS01300">
    <property type="entry name" value="RECR"/>
    <property type="match status" value="1"/>
</dbReference>
<dbReference type="PROSITE" id="PS50880">
    <property type="entry name" value="TOPRIM"/>
    <property type="match status" value="1"/>
</dbReference>
<evidence type="ECO:0000255" key="1">
    <source>
        <dbReference type="HAMAP-Rule" id="MF_00017"/>
    </source>
</evidence>
<gene>
    <name evidence="1" type="primary">recR</name>
    <name type="ordered locus">XOO1066</name>
</gene>
<reference key="1">
    <citation type="journal article" date="2005" name="Nucleic Acids Res.">
        <title>The genome sequence of Xanthomonas oryzae pathovar oryzae KACC10331, the bacterial blight pathogen of rice.</title>
        <authorList>
            <person name="Lee B.-M."/>
            <person name="Park Y.-J."/>
            <person name="Park D.-S."/>
            <person name="Kang H.-W."/>
            <person name="Kim J.-G."/>
            <person name="Song E.-S."/>
            <person name="Park I.-C."/>
            <person name="Yoon U.-H."/>
            <person name="Hahn J.-H."/>
            <person name="Koo B.-S."/>
            <person name="Lee G.-B."/>
            <person name="Kim H."/>
            <person name="Park H.-S."/>
            <person name="Yoon K.-O."/>
            <person name="Kim J.-H."/>
            <person name="Jung C.-H."/>
            <person name="Koh N.-H."/>
            <person name="Seo J.-S."/>
            <person name="Go S.-J."/>
        </authorList>
    </citation>
    <scope>NUCLEOTIDE SEQUENCE [LARGE SCALE GENOMIC DNA]</scope>
    <source>
        <strain>KACC10331 / KXO85</strain>
    </source>
</reference>
<feature type="chain" id="PRO_0000190429" description="Recombination protein RecR">
    <location>
        <begin position="1"/>
        <end position="197"/>
    </location>
</feature>
<feature type="domain" description="Toprim" evidence="1">
    <location>
        <begin position="78"/>
        <end position="173"/>
    </location>
</feature>
<feature type="zinc finger region" description="C4-type" evidence="1">
    <location>
        <begin position="55"/>
        <end position="70"/>
    </location>
</feature>
<comment type="function">
    <text evidence="1">May play a role in DNA repair. It seems to be involved in an RecBC-independent recombinational process of DNA repair. It may act with RecF and RecO.</text>
</comment>
<comment type="similarity">
    <text evidence="1">Belongs to the RecR family.</text>
</comment>
<sequence>MSSLLEQLIEAFRVLPGVGQKSAQRMAYHVLEREREGGRRLATTLANAVEKVGHCVQCRDFTESEICTICASSSRDRQQLCVVESPADRLAIEHATGYRGLYFVLQGRLSPLDGIGPRELGLDRLGERLAAGEVTEMIIATNATVEGEATAHYLAQLARQHAVRPSRLAQGMPLGGELEYVDRGTLSHAFGTRSEVL</sequence>
<keyword id="KW-0227">DNA damage</keyword>
<keyword id="KW-0233">DNA recombination</keyword>
<keyword id="KW-0234">DNA repair</keyword>
<keyword id="KW-0479">Metal-binding</keyword>
<keyword id="KW-1185">Reference proteome</keyword>
<keyword id="KW-0862">Zinc</keyword>
<keyword id="KW-0863">Zinc-finger</keyword>
<name>RECR_XANOR</name>
<protein>
    <recommendedName>
        <fullName evidence="1">Recombination protein RecR</fullName>
    </recommendedName>
</protein>
<organism>
    <name type="scientific">Xanthomonas oryzae pv. oryzae (strain KACC10331 / KXO85)</name>
    <dbReference type="NCBI Taxonomy" id="291331"/>
    <lineage>
        <taxon>Bacteria</taxon>
        <taxon>Pseudomonadati</taxon>
        <taxon>Pseudomonadota</taxon>
        <taxon>Gammaproteobacteria</taxon>
        <taxon>Lysobacterales</taxon>
        <taxon>Lysobacteraceae</taxon>
        <taxon>Xanthomonas</taxon>
    </lineage>
</organism>
<proteinExistence type="inferred from homology"/>
<accession>Q5H401</accession>